<proteinExistence type="inferred from homology"/>
<dbReference type="EC" id="3.7.1.3" evidence="1"/>
<dbReference type="EMBL" id="CP000548">
    <property type="protein sequence ID" value="ABO07333.1"/>
    <property type="molecule type" value="Genomic_DNA"/>
</dbReference>
<dbReference type="RefSeq" id="WP_004189663.1">
    <property type="nucleotide sequence ID" value="NZ_CP007802.1"/>
</dbReference>
<dbReference type="SMR" id="A3MHE2"/>
<dbReference type="GeneID" id="92978122"/>
<dbReference type="KEGG" id="bmaz:BM44_2877"/>
<dbReference type="KEGG" id="bmn:BMA10247_0099"/>
<dbReference type="PATRIC" id="fig|320389.8.peg.3247"/>
<dbReference type="UniPathway" id="UPA00253">
    <property type="reaction ID" value="UER00329"/>
</dbReference>
<dbReference type="UniPathway" id="UPA00334">
    <property type="reaction ID" value="UER00455"/>
</dbReference>
<dbReference type="GO" id="GO:0005737">
    <property type="term" value="C:cytoplasm"/>
    <property type="evidence" value="ECO:0007669"/>
    <property type="project" value="InterPro"/>
</dbReference>
<dbReference type="GO" id="GO:0030429">
    <property type="term" value="F:kynureninase activity"/>
    <property type="evidence" value="ECO:0007669"/>
    <property type="project" value="UniProtKB-UniRule"/>
</dbReference>
<dbReference type="GO" id="GO:0030170">
    <property type="term" value="F:pyridoxal phosphate binding"/>
    <property type="evidence" value="ECO:0007669"/>
    <property type="project" value="UniProtKB-UniRule"/>
</dbReference>
<dbReference type="GO" id="GO:0043420">
    <property type="term" value="P:anthranilate metabolic process"/>
    <property type="evidence" value="ECO:0007669"/>
    <property type="project" value="TreeGrafter"/>
</dbReference>
<dbReference type="GO" id="GO:0097053">
    <property type="term" value="P:L-kynurenine catabolic process"/>
    <property type="evidence" value="ECO:0007669"/>
    <property type="project" value="UniProtKB-UniRule"/>
</dbReference>
<dbReference type="GO" id="GO:0019441">
    <property type="term" value="P:L-tryptophan catabolic process to kynurenine"/>
    <property type="evidence" value="ECO:0007669"/>
    <property type="project" value="TreeGrafter"/>
</dbReference>
<dbReference type="GO" id="GO:0009435">
    <property type="term" value="P:NAD biosynthetic process"/>
    <property type="evidence" value="ECO:0007669"/>
    <property type="project" value="UniProtKB-UniPathway"/>
</dbReference>
<dbReference type="GO" id="GO:0019805">
    <property type="term" value="P:quinolinate biosynthetic process"/>
    <property type="evidence" value="ECO:0007669"/>
    <property type="project" value="UniProtKB-UniRule"/>
</dbReference>
<dbReference type="FunFam" id="3.40.640.10:FF:000107">
    <property type="entry name" value="Kynureninase"/>
    <property type="match status" value="1"/>
</dbReference>
<dbReference type="Gene3D" id="3.90.1150.10">
    <property type="entry name" value="Aspartate Aminotransferase, domain 1"/>
    <property type="match status" value="1"/>
</dbReference>
<dbReference type="Gene3D" id="3.40.640.10">
    <property type="entry name" value="Type I PLP-dependent aspartate aminotransferase-like (Major domain)"/>
    <property type="match status" value="1"/>
</dbReference>
<dbReference type="HAMAP" id="MF_01970">
    <property type="entry name" value="Kynureninase"/>
    <property type="match status" value="1"/>
</dbReference>
<dbReference type="InterPro" id="IPR010111">
    <property type="entry name" value="Kynureninase"/>
</dbReference>
<dbReference type="InterPro" id="IPR015424">
    <property type="entry name" value="PyrdxlP-dep_Trfase"/>
</dbReference>
<dbReference type="InterPro" id="IPR015421">
    <property type="entry name" value="PyrdxlP-dep_Trfase_major"/>
</dbReference>
<dbReference type="InterPro" id="IPR015422">
    <property type="entry name" value="PyrdxlP-dep_Trfase_small"/>
</dbReference>
<dbReference type="NCBIfam" id="TIGR01814">
    <property type="entry name" value="kynureninase"/>
    <property type="match status" value="1"/>
</dbReference>
<dbReference type="PANTHER" id="PTHR14084">
    <property type="entry name" value="KYNURENINASE"/>
    <property type="match status" value="1"/>
</dbReference>
<dbReference type="PANTHER" id="PTHR14084:SF0">
    <property type="entry name" value="KYNURENINASE"/>
    <property type="match status" value="1"/>
</dbReference>
<dbReference type="Pfam" id="PF22580">
    <property type="entry name" value="KYNU_C"/>
    <property type="match status" value="1"/>
</dbReference>
<dbReference type="PIRSF" id="PIRSF038800">
    <property type="entry name" value="KYNU"/>
    <property type="match status" value="1"/>
</dbReference>
<dbReference type="SUPFAM" id="SSF53383">
    <property type="entry name" value="PLP-dependent transferases"/>
    <property type="match status" value="1"/>
</dbReference>
<gene>
    <name evidence="1" type="primary">kynU</name>
    <name type="ordered locus">BMA10247_0099</name>
</gene>
<feature type="chain" id="PRO_0000356995" description="Kynureninase">
    <location>
        <begin position="1"/>
        <end position="416"/>
    </location>
</feature>
<feature type="binding site" evidence="1">
    <location>
        <position position="97"/>
    </location>
    <ligand>
        <name>pyridoxal 5'-phosphate</name>
        <dbReference type="ChEBI" id="CHEBI:597326"/>
    </ligand>
</feature>
<feature type="binding site" evidence="1">
    <location>
        <position position="98"/>
    </location>
    <ligand>
        <name>pyridoxal 5'-phosphate</name>
        <dbReference type="ChEBI" id="CHEBI:597326"/>
    </ligand>
</feature>
<feature type="binding site" evidence="1">
    <location>
        <begin position="129"/>
        <end position="132"/>
    </location>
    <ligand>
        <name>pyridoxal 5'-phosphate</name>
        <dbReference type="ChEBI" id="CHEBI:597326"/>
    </ligand>
</feature>
<feature type="binding site" evidence="1">
    <location>
        <position position="172"/>
    </location>
    <ligand>
        <name>pyridoxal 5'-phosphate</name>
        <dbReference type="ChEBI" id="CHEBI:597326"/>
    </ligand>
</feature>
<feature type="binding site" evidence="1">
    <location>
        <position position="201"/>
    </location>
    <ligand>
        <name>pyridoxal 5'-phosphate</name>
        <dbReference type="ChEBI" id="CHEBI:597326"/>
    </ligand>
</feature>
<feature type="binding site" evidence="1">
    <location>
        <position position="204"/>
    </location>
    <ligand>
        <name>pyridoxal 5'-phosphate</name>
        <dbReference type="ChEBI" id="CHEBI:597326"/>
    </ligand>
</feature>
<feature type="binding site" evidence="1">
    <location>
        <position position="226"/>
    </location>
    <ligand>
        <name>pyridoxal 5'-phosphate</name>
        <dbReference type="ChEBI" id="CHEBI:597326"/>
    </ligand>
</feature>
<feature type="binding site" evidence="1">
    <location>
        <position position="256"/>
    </location>
    <ligand>
        <name>pyridoxal 5'-phosphate</name>
        <dbReference type="ChEBI" id="CHEBI:597326"/>
    </ligand>
</feature>
<feature type="binding site" evidence="1">
    <location>
        <position position="282"/>
    </location>
    <ligand>
        <name>pyridoxal 5'-phosphate</name>
        <dbReference type="ChEBI" id="CHEBI:597326"/>
    </ligand>
</feature>
<feature type="modified residue" description="N6-(pyridoxal phosphate)lysine" evidence="1">
    <location>
        <position position="227"/>
    </location>
</feature>
<sequence>MKTREEALALDRDDPLAPLREQFALPAGVIYLDGNSLGAQPRAAAARAQQVIGAEWGEGLIRSWNTAGWFALPRRLGDRLAPLIGAADDEVAITDTISINLFKLLAAMLRHQARHAPKRRVIVSERSNFPTDLYIAQGLIAQLDRDYELRLIDDPADLPDALDDETAVAMITHVNYRTGYMHDMPSVTQTVRQAGALMLWDLAHSAGAVPVDLNGALADGAVGCTYKYLNGGPGSPAFVWVPKRHQRAFEQPLSGWWGHRAPFAMQPAFEPDPGIARFLCGTQPIVSMSMVECGLDVFAQTDMHAIRRKSLALTDAFVALVESRCAGQPLKLVTPRAHHQRGSQASFEHPHGYEVMQALIARGVIGDYREPRILRFGFTPLYTRFVDVWDAVETLRDILDTEAWRAPEFATRAAVT</sequence>
<name>KYNU_BURM7</name>
<keyword id="KW-0378">Hydrolase</keyword>
<keyword id="KW-0662">Pyridine nucleotide biosynthesis</keyword>
<keyword id="KW-0663">Pyridoxal phosphate</keyword>
<protein>
    <recommendedName>
        <fullName evidence="1">Kynureninase</fullName>
        <ecNumber evidence="1">3.7.1.3</ecNumber>
    </recommendedName>
    <alternativeName>
        <fullName evidence="1">L-kynurenine hydrolase</fullName>
    </alternativeName>
</protein>
<reference key="1">
    <citation type="journal article" date="2010" name="Genome Biol. Evol.">
        <title>Continuing evolution of Burkholderia mallei through genome reduction and large-scale rearrangements.</title>
        <authorList>
            <person name="Losada L."/>
            <person name="Ronning C.M."/>
            <person name="DeShazer D."/>
            <person name="Woods D."/>
            <person name="Fedorova N."/>
            <person name="Kim H.S."/>
            <person name="Shabalina S.A."/>
            <person name="Pearson T.R."/>
            <person name="Brinkac L."/>
            <person name="Tan P."/>
            <person name="Nandi T."/>
            <person name="Crabtree J."/>
            <person name="Badger J."/>
            <person name="Beckstrom-Sternberg S."/>
            <person name="Saqib M."/>
            <person name="Schutzer S.E."/>
            <person name="Keim P."/>
            <person name="Nierman W.C."/>
        </authorList>
    </citation>
    <scope>NUCLEOTIDE SEQUENCE [LARGE SCALE GENOMIC DNA]</scope>
    <source>
        <strain>NCTC 10247</strain>
    </source>
</reference>
<organism>
    <name type="scientific">Burkholderia mallei (strain NCTC 10247)</name>
    <dbReference type="NCBI Taxonomy" id="320389"/>
    <lineage>
        <taxon>Bacteria</taxon>
        <taxon>Pseudomonadati</taxon>
        <taxon>Pseudomonadota</taxon>
        <taxon>Betaproteobacteria</taxon>
        <taxon>Burkholderiales</taxon>
        <taxon>Burkholderiaceae</taxon>
        <taxon>Burkholderia</taxon>
        <taxon>pseudomallei group</taxon>
    </lineage>
</organism>
<comment type="function">
    <text evidence="1">Catalyzes the cleavage of L-kynurenine (L-Kyn) and L-3-hydroxykynurenine (L-3OHKyn) into anthranilic acid (AA) and 3-hydroxyanthranilic acid (3-OHAA), respectively.</text>
</comment>
<comment type="catalytic activity">
    <reaction evidence="1">
        <text>L-kynurenine + H2O = anthranilate + L-alanine + H(+)</text>
        <dbReference type="Rhea" id="RHEA:16813"/>
        <dbReference type="ChEBI" id="CHEBI:15377"/>
        <dbReference type="ChEBI" id="CHEBI:15378"/>
        <dbReference type="ChEBI" id="CHEBI:16567"/>
        <dbReference type="ChEBI" id="CHEBI:57959"/>
        <dbReference type="ChEBI" id="CHEBI:57972"/>
        <dbReference type="EC" id="3.7.1.3"/>
    </reaction>
</comment>
<comment type="catalytic activity">
    <reaction evidence="1">
        <text>3-hydroxy-L-kynurenine + H2O = 3-hydroxyanthranilate + L-alanine + H(+)</text>
        <dbReference type="Rhea" id="RHEA:25143"/>
        <dbReference type="ChEBI" id="CHEBI:15377"/>
        <dbReference type="ChEBI" id="CHEBI:15378"/>
        <dbReference type="ChEBI" id="CHEBI:36559"/>
        <dbReference type="ChEBI" id="CHEBI:57972"/>
        <dbReference type="ChEBI" id="CHEBI:58125"/>
        <dbReference type="EC" id="3.7.1.3"/>
    </reaction>
</comment>
<comment type="cofactor">
    <cofactor evidence="1">
        <name>pyridoxal 5'-phosphate</name>
        <dbReference type="ChEBI" id="CHEBI:597326"/>
    </cofactor>
</comment>
<comment type="pathway">
    <text evidence="1">Amino-acid degradation; L-kynurenine degradation; L-alanine and anthranilate from L-kynurenine: step 1/1.</text>
</comment>
<comment type="pathway">
    <text evidence="1">Cofactor biosynthesis; NAD(+) biosynthesis; quinolinate from L-kynurenine: step 2/3.</text>
</comment>
<comment type="subunit">
    <text evidence="1">Homodimer.</text>
</comment>
<comment type="similarity">
    <text evidence="1">Belongs to the kynureninase family.</text>
</comment>
<accession>A3MHE2</accession>
<evidence type="ECO:0000255" key="1">
    <source>
        <dbReference type="HAMAP-Rule" id="MF_01970"/>
    </source>
</evidence>